<feature type="chain" id="PRO_0000408234" description="Sensory neuron membrane protein 1">
    <location>
        <begin position="1"/>
        <end position="522"/>
    </location>
</feature>
<feature type="topological domain" description="Cytoplasmic" evidence="3">
    <location>
        <begin position="1"/>
        <end position="11"/>
    </location>
</feature>
<feature type="transmembrane region" description="Helical" evidence="3">
    <location>
        <begin position="12"/>
        <end position="32"/>
    </location>
</feature>
<feature type="topological domain" description="Extracellular" evidence="3">
    <location>
        <begin position="33"/>
        <end position="458"/>
    </location>
</feature>
<feature type="transmembrane region" description="Helical" evidence="3">
    <location>
        <begin position="459"/>
        <end position="479"/>
    </location>
</feature>
<feature type="topological domain" description="Cytoplasmic" evidence="3">
    <location>
        <begin position="480"/>
        <end position="522"/>
    </location>
</feature>
<feature type="region of interest" description="Disordered" evidence="4">
    <location>
        <begin position="500"/>
        <end position="522"/>
    </location>
</feature>
<feature type="compositionally biased region" description="Polar residues" evidence="4">
    <location>
        <begin position="513"/>
        <end position="522"/>
    </location>
</feature>
<feature type="glycosylation site" description="N-linked (GlcNAc...) asparagine" evidence="3">
    <location>
        <position position="67"/>
    </location>
</feature>
<feature type="glycosylation site" description="N-linked (GlcNAc...) asparagine" evidence="3">
    <location>
        <position position="105"/>
    </location>
</feature>
<feature type="glycosylation site" description="N-linked (GlcNAc...) asparagine" evidence="3">
    <location>
        <position position="229"/>
    </location>
</feature>
<feature type="glycosylation site" description="N-linked (GlcNAc...) asparagine" evidence="3">
    <location>
        <position position="440"/>
    </location>
</feature>
<feature type="disulfide bond" evidence="2">
    <location>
        <begin position="268"/>
        <end position="333"/>
    </location>
</feature>
<feature type="disulfide bond" evidence="2">
    <location>
        <begin position="297"/>
        <end position="352"/>
    </location>
</feature>
<feature type="disulfide bond" evidence="2">
    <location>
        <begin position="335"/>
        <end position="341"/>
    </location>
</feature>
<accession>Q9U3U2</accession>
<proteinExistence type="evidence at transcript level"/>
<reference evidence="7 8" key="1">
    <citation type="journal article" date="2001" name="J. Neurobiol.">
        <title>Antennal SNMPs (sensory neuron membrane proteins) of Lepidoptera define a unique family of invertebrate CD36-like proteins.</title>
        <authorList>
            <person name="Rogers M.E."/>
            <person name="Krieger J."/>
            <person name="Vogt R.G."/>
        </authorList>
    </citation>
    <scope>NUCLEOTIDE SEQUENCE [MRNA]</scope>
    <scope>TISSUE SPECIFICITY</scope>
    <source>
        <tissue evidence="8">Antenna</tissue>
    </source>
</reference>
<gene>
    <name evidence="6" type="primary">SNMP1</name>
</gene>
<name>SNMP1_BOMMO</name>
<dbReference type="EMBL" id="AJ251958">
    <property type="protein sequence ID" value="CAB65730.1"/>
    <property type="molecule type" value="mRNA"/>
</dbReference>
<dbReference type="RefSeq" id="NP_001037186.1">
    <property type="nucleotide sequence ID" value="NM_001043721.1"/>
</dbReference>
<dbReference type="SMR" id="Q9U3U2"/>
<dbReference type="FunCoup" id="Q9U3U2">
    <property type="interactions" value="1"/>
</dbReference>
<dbReference type="STRING" id="7091.Q9U3U2"/>
<dbReference type="GlyCosmos" id="Q9U3U2">
    <property type="glycosylation" value="4 sites, No reported glycans"/>
</dbReference>
<dbReference type="PaxDb" id="7091-BGIBMGA000215-TA"/>
<dbReference type="EnsemblMetazoa" id="NM_001043721.1">
    <property type="protein sequence ID" value="NP_001037186.1"/>
    <property type="gene ID" value="GeneID_692679"/>
</dbReference>
<dbReference type="GeneID" id="692679"/>
<dbReference type="KEGG" id="bmor:692679"/>
<dbReference type="CTD" id="42514"/>
<dbReference type="eggNOG" id="KOG3776">
    <property type="taxonomic scope" value="Eukaryota"/>
</dbReference>
<dbReference type="HOGENOM" id="CLU_019853_1_2_1"/>
<dbReference type="InParanoid" id="Q9U3U2"/>
<dbReference type="OrthoDB" id="532461at7088"/>
<dbReference type="Proteomes" id="UP000005204">
    <property type="component" value="Unassembled WGS sequence"/>
</dbReference>
<dbReference type="GO" id="GO:0005737">
    <property type="term" value="C:cytoplasm"/>
    <property type="evidence" value="ECO:0007669"/>
    <property type="project" value="TreeGrafter"/>
</dbReference>
<dbReference type="GO" id="GO:0005886">
    <property type="term" value="C:plasma membrane"/>
    <property type="evidence" value="ECO:0007669"/>
    <property type="project" value="UniProtKB-SubCell"/>
</dbReference>
<dbReference type="GO" id="GO:0005044">
    <property type="term" value="F:scavenger receptor activity"/>
    <property type="evidence" value="ECO:0007669"/>
    <property type="project" value="TreeGrafter"/>
</dbReference>
<dbReference type="GO" id="GO:0007608">
    <property type="term" value="P:sensory perception of smell"/>
    <property type="evidence" value="ECO:0007669"/>
    <property type="project" value="UniProtKB-KW"/>
</dbReference>
<dbReference type="InterPro" id="IPR002159">
    <property type="entry name" value="CD36_fam"/>
</dbReference>
<dbReference type="PANTHER" id="PTHR11923">
    <property type="entry name" value="SCAVENGER RECEPTOR CLASS B TYPE-1 SR-B1"/>
    <property type="match status" value="1"/>
</dbReference>
<dbReference type="PANTHER" id="PTHR11923:SF69">
    <property type="entry name" value="SENSORY NEURON MEMBRANE PROTEIN 1"/>
    <property type="match status" value="1"/>
</dbReference>
<dbReference type="Pfam" id="PF01130">
    <property type="entry name" value="CD36"/>
    <property type="match status" value="1"/>
</dbReference>
<dbReference type="PRINTS" id="PR01609">
    <property type="entry name" value="CD36FAMILY"/>
</dbReference>
<sequence length="522" mass="58763">MQLAKPLKYAAISGIVAFVGLMFGWVIFPAILKSQLKKEMALSKKTDVRKMWEKIPFALDFKIYLFNYTNAEDVQKGAVPIVKEVGPFYFEEWKEKVEVEENEGNDTINYKKIDVFLFKPELSGPGLTGEEVIVMPNIFMMAMALTVYREKPAMLNVAAKAINGIFDSPSDVFMRVKALDILFRGIIINCDRTEFAPKAACTTIKKEAPNGIVFEPNNQLRFSLFGVRNNSVDPHVVTVKRGVQNVMDVGRVVAIDGKTKMNVWRDSCNEYQGTDGTVFPPFLTHKDRLQSFSGDLCRSFKPWFQKKTSYNGIKTNRYVANIGDFANDPELQCYCDSPDKCPPKGLMDLYKCIKAPMFVSMPHYLEGDPELLKNVKGLNPNAKEHGIEIDFEPISGTPMVAKQRIQFNIQLLKSEKMDLLKDLPGTIVPLFWIEEGLSLNKTFVKMLKSQLFIPKRVVSVVCWCMISFGSLGVIAAVIFHFKGDIMHLAVAGDNSVSKIKPENDENKEVGVMGQNQEPAKVM</sequence>
<keyword id="KW-1003">Cell membrane</keyword>
<keyword id="KW-1015">Disulfide bond</keyword>
<keyword id="KW-0325">Glycoprotein</keyword>
<keyword id="KW-0472">Membrane</keyword>
<keyword id="KW-0552">Olfaction</keyword>
<keyword id="KW-0675">Receptor</keyword>
<keyword id="KW-1185">Reference proteome</keyword>
<keyword id="KW-0716">Sensory transduction</keyword>
<keyword id="KW-0812">Transmembrane</keyword>
<keyword id="KW-1133">Transmembrane helix</keyword>
<protein>
    <recommendedName>
        <fullName>Sensory neuron membrane protein 1</fullName>
        <shortName evidence="6">SNMP1-Bmor</shortName>
    </recommendedName>
</protein>
<organism>
    <name type="scientific">Bombyx mori</name>
    <name type="common">Silk moth</name>
    <dbReference type="NCBI Taxonomy" id="7091"/>
    <lineage>
        <taxon>Eukaryota</taxon>
        <taxon>Metazoa</taxon>
        <taxon>Ecdysozoa</taxon>
        <taxon>Arthropoda</taxon>
        <taxon>Hexapoda</taxon>
        <taxon>Insecta</taxon>
        <taxon>Pterygota</taxon>
        <taxon>Neoptera</taxon>
        <taxon>Endopterygota</taxon>
        <taxon>Lepidoptera</taxon>
        <taxon>Glossata</taxon>
        <taxon>Ditrysia</taxon>
        <taxon>Bombycoidea</taxon>
        <taxon>Bombycidae</taxon>
        <taxon>Bombycinae</taxon>
        <taxon>Bombyx</taxon>
    </lineage>
</organism>
<comment type="function">
    <text evidence="1">Plays an olfactory role that is not restricted to pheromone sensitivity.</text>
</comment>
<comment type="subcellular location">
    <subcellularLocation>
        <location evidence="1">Cell membrane</location>
        <topology evidence="1">Multi-pass membrane protein</topology>
    </subcellularLocation>
</comment>
<comment type="tissue specificity">
    <text evidence="5">Principal component of the olfactory cilia membrane. Detected in both male and female antennae but not present in leg, abdomen, thorax or head.</text>
</comment>
<comment type="similarity">
    <text evidence="7">Belongs to the CD36 family.</text>
</comment>
<evidence type="ECO:0000250" key="1">
    <source>
        <dbReference type="UniProtKB" id="O02351"/>
    </source>
</evidence>
<evidence type="ECO:0000250" key="2">
    <source>
        <dbReference type="UniProtKB" id="P26201"/>
    </source>
</evidence>
<evidence type="ECO:0000255" key="3"/>
<evidence type="ECO:0000256" key="4">
    <source>
        <dbReference type="SAM" id="MobiDB-lite"/>
    </source>
</evidence>
<evidence type="ECO:0000269" key="5">
    <source>
    </source>
</evidence>
<evidence type="ECO:0000303" key="6">
    <source>
    </source>
</evidence>
<evidence type="ECO:0000305" key="7"/>
<evidence type="ECO:0000312" key="8">
    <source>
        <dbReference type="EMBL" id="CAB65730.1"/>
    </source>
</evidence>